<dbReference type="EMBL" id="CP000439">
    <property type="protein sequence ID" value="ABK89884.1"/>
    <property type="molecule type" value="Genomic_DNA"/>
</dbReference>
<dbReference type="RefSeq" id="WP_003039430.1">
    <property type="nucleotide sequence ID" value="NC_008601.1"/>
</dbReference>
<dbReference type="SMR" id="A0Q6L9"/>
<dbReference type="KEGG" id="ftn:FTN_0996"/>
<dbReference type="BioCyc" id="FTUL401614:G1G75-1038-MONOMER"/>
<dbReference type="Proteomes" id="UP000000762">
    <property type="component" value="Chromosome"/>
</dbReference>
<dbReference type="GO" id="GO:0009376">
    <property type="term" value="C:HslUV protease complex"/>
    <property type="evidence" value="ECO:0007669"/>
    <property type="project" value="UniProtKB-UniRule"/>
</dbReference>
<dbReference type="GO" id="GO:0005524">
    <property type="term" value="F:ATP binding"/>
    <property type="evidence" value="ECO:0007669"/>
    <property type="project" value="UniProtKB-UniRule"/>
</dbReference>
<dbReference type="GO" id="GO:0016887">
    <property type="term" value="F:ATP hydrolysis activity"/>
    <property type="evidence" value="ECO:0007669"/>
    <property type="project" value="InterPro"/>
</dbReference>
<dbReference type="GO" id="GO:0008233">
    <property type="term" value="F:peptidase activity"/>
    <property type="evidence" value="ECO:0007669"/>
    <property type="project" value="InterPro"/>
</dbReference>
<dbReference type="GO" id="GO:0036402">
    <property type="term" value="F:proteasome-activating activity"/>
    <property type="evidence" value="ECO:0007669"/>
    <property type="project" value="UniProtKB-UniRule"/>
</dbReference>
<dbReference type="GO" id="GO:0043335">
    <property type="term" value="P:protein unfolding"/>
    <property type="evidence" value="ECO:0007669"/>
    <property type="project" value="UniProtKB-UniRule"/>
</dbReference>
<dbReference type="GO" id="GO:0051603">
    <property type="term" value="P:proteolysis involved in protein catabolic process"/>
    <property type="evidence" value="ECO:0007669"/>
    <property type="project" value="TreeGrafter"/>
</dbReference>
<dbReference type="CDD" id="cd19498">
    <property type="entry name" value="RecA-like_HslU"/>
    <property type="match status" value="1"/>
</dbReference>
<dbReference type="FunFam" id="3.40.50.300:FF:000213">
    <property type="entry name" value="ATP-dependent protease ATPase subunit HslU"/>
    <property type="match status" value="1"/>
</dbReference>
<dbReference type="FunFam" id="3.40.50.300:FF:000220">
    <property type="entry name" value="ATP-dependent protease ATPase subunit HslU"/>
    <property type="match status" value="1"/>
</dbReference>
<dbReference type="Gene3D" id="1.10.8.60">
    <property type="match status" value="1"/>
</dbReference>
<dbReference type="Gene3D" id="1.10.8.10">
    <property type="entry name" value="DNA helicase RuvA subunit, C-terminal domain"/>
    <property type="match status" value="2"/>
</dbReference>
<dbReference type="Gene3D" id="3.40.50.300">
    <property type="entry name" value="P-loop containing nucleotide triphosphate hydrolases"/>
    <property type="match status" value="2"/>
</dbReference>
<dbReference type="HAMAP" id="MF_00249">
    <property type="entry name" value="HslU"/>
    <property type="match status" value="1"/>
</dbReference>
<dbReference type="InterPro" id="IPR003593">
    <property type="entry name" value="AAA+_ATPase"/>
</dbReference>
<dbReference type="InterPro" id="IPR050052">
    <property type="entry name" value="ATP-dep_Clp_protease_ClpX"/>
</dbReference>
<dbReference type="InterPro" id="IPR003959">
    <property type="entry name" value="ATPase_AAA_core"/>
</dbReference>
<dbReference type="InterPro" id="IPR019489">
    <property type="entry name" value="Clp_ATPase_C"/>
</dbReference>
<dbReference type="InterPro" id="IPR004491">
    <property type="entry name" value="HslU"/>
</dbReference>
<dbReference type="InterPro" id="IPR027417">
    <property type="entry name" value="P-loop_NTPase"/>
</dbReference>
<dbReference type="NCBIfam" id="TIGR00390">
    <property type="entry name" value="hslU"/>
    <property type="match status" value="1"/>
</dbReference>
<dbReference type="NCBIfam" id="NF003544">
    <property type="entry name" value="PRK05201.1"/>
    <property type="match status" value="1"/>
</dbReference>
<dbReference type="PANTHER" id="PTHR48102">
    <property type="entry name" value="ATP-DEPENDENT CLP PROTEASE ATP-BINDING SUBUNIT CLPX-LIKE, MITOCHONDRIAL-RELATED"/>
    <property type="match status" value="1"/>
</dbReference>
<dbReference type="PANTHER" id="PTHR48102:SF3">
    <property type="entry name" value="ATP-DEPENDENT PROTEASE ATPASE SUBUNIT HSLU"/>
    <property type="match status" value="1"/>
</dbReference>
<dbReference type="Pfam" id="PF00004">
    <property type="entry name" value="AAA"/>
    <property type="match status" value="1"/>
</dbReference>
<dbReference type="Pfam" id="PF07724">
    <property type="entry name" value="AAA_2"/>
    <property type="match status" value="1"/>
</dbReference>
<dbReference type="SMART" id="SM00382">
    <property type="entry name" value="AAA"/>
    <property type="match status" value="1"/>
</dbReference>
<dbReference type="SMART" id="SM01086">
    <property type="entry name" value="ClpB_D2-small"/>
    <property type="match status" value="1"/>
</dbReference>
<dbReference type="SUPFAM" id="SSF52540">
    <property type="entry name" value="P-loop containing nucleoside triphosphate hydrolases"/>
    <property type="match status" value="1"/>
</dbReference>
<name>HSLU_FRATN</name>
<protein>
    <recommendedName>
        <fullName evidence="1">ATP-dependent protease ATPase subunit HslU</fullName>
    </recommendedName>
    <alternativeName>
        <fullName evidence="1">Unfoldase HslU</fullName>
    </alternativeName>
</protein>
<sequence>MTQIMTPKTIVHELERHIIGQNDAKKAVAIALRNRWRRMQLDNEMRQEVTPKNILMIGPTGVGKTEIARRLAKLADAPFIKVEATKFTEVGYVGKDVESIIRDLVETAVKMKREEAKEKVTEKAARLAEDRILDVLIPPARTSESKVGFANEPAEDAASKKEKENKTREIFRKKIQKGELDDKEIEIEVAVAPKTIGVMGPPGMEDMTSQLQDLFSSLSTDKKKNKKMRIKDAIKLAQDEEAAKLVNEEDIKARALEAVEQNGIVFLDEIDKVCRKSSNSGADVSREGVQRDLLPLVEGSTVSTKYGMIKTDHILFIASGAFHVAKPSDLIPELQGRLPIRVELKSLEIEDFVRILREPDCSILKQYIALMKTEGVDLSFEEDAIRKIAEIAYKVNEEVENIGARRLHTVMERLLEEISFDAPELVEKNINITTDYVNEKLGNLVKNKDLSQYIL</sequence>
<gene>
    <name evidence="1" type="primary">hslU</name>
    <name type="ordered locus">FTN_0996</name>
</gene>
<evidence type="ECO:0000255" key="1">
    <source>
        <dbReference type="HAMAP-Rule" id="MF_00249"/>
    </source>
</evidence>
<evidence type="ECO:0000256" key="2">
    <source>
        <dbReference type="SAM" id="MobiDB-lite"/>
    </source>
</evidence>
<organism>
    <name type="scientific">Francisella tularensis subsp. novicida (strain U112)</name>
    <dbReference type="NCBI Taxonomy" id="401614"/>
    <lineage>
        <taxon>Bacteria</taxon>
        <taxon>Pseudomonadati</taxon>
        <taxon>Pseudomonadota</taxon>
        <taxon>Gammaproteobacteria</taxon>
        <taxon>Thiotrichales</taxon>
        <taxon>Francisellaceae</taxon>
        <taxon>Francisella</taxon>
    </lineage>
</organism>
<feature type="chain" id="PRO_1000012741" description="ATP-dependent protease ATPase subunit HslU">
    <location>
        <begin position="1"/>
        <end position="455"/>
    </location>
</feature>
<feature type="region of interest" description="Disordered" evidence="2">
    <location>
        <begin position="144"/>
        <end position="163"/>
    </location>
</feature>
<feature type="binding site" evidence="1">
    <location>
        <position position="19"/>
    </location>
    <ligand>
        <name>ATP</name>
        <dbReference type="ChEBI" id="CHEBI:30616"/>
    </ligand>
</feature>
<feature type="binding site" evidence="1">
    <location>
        <begin position="61"/>
        <end position="66"/>
    </location>
    <ligand>
        <name>ATP</name>
        <dbReference type="ChEBI" id="CHEBI:30616"/>
    </ligand>
</feature>
<feature type="binding site" evidence="1">
    <location>
        <position position="268"/>
    </location>
    <ligand>
        <name>ATP</name>
        <dbReference type="ChEBI" id="CHEBI:30616"/>
    </ligand>
</feature>
<feature type="binding site" evidence="1">
    <location>
        <position position="333"/>
    </location>
    <ligand>
        <name>ATP</name>
        <dbReference type="ChEBI" id="CHEBI:30616"/>
    </ligand>
</feature>
<feature type="binding site" evidence="1">
    <location>
        <position position="405"/>
    </location>
    <ligand>
        <name>ATP</name>
        <dbReference type="ChEBI" id="CHEBI:30616"/>
    </ligand>
</feature>
<comment type="function">
    <text evidence="1">ATPase subunit of a proteasome-like degradation complex; this subunit has chaperone activity. The binding of ATP and its subsequent hydrolysis by HslU are essential for unfolding of protein substrates subsequently hydrolyzed by HslV. HslU recognizes the N-terminal part of its protein substrates and unfolds these before they are guided to HslV for hydrolysis.</text>
</comment>
<comment type="subunit">
    <text evidence="1">A double ring-shaped homohexamer of HslV is capped on each side by a ring-shaped HslU homohexamer. The assembly of the HslU/HslV complex is dependent on binding of ATP.</text>
</comment>
<comment type="subcellular location">
    <subcellularLocation>
        <location evidence="1">Cytoplasm</location>
    </subcellularLocation>
</comment>
<comment type="similarity">
    <text evidence="1">Belongs to the ClpX chaperone family. HslU subfamily.</text>
</comment>
<reference key="1">
    <citation type="journal article" date="2007" name="Genome Biol.">
        <title>Comparison of Francisella tularensis genomes reveals evolutionary events associated with the emergence of human pathogenic strains.</title>
        <authorList>
            <person name="Rohmer L."/>
            <person name="Fong C."/>
            <person name="Abmayr S."/>
            <person name="Wasnick M."/>
            <person name="Larson Freeman T.J."/>
            <person name="Radey M."/>
            <person name="Guina T."/>
            <person name="Svensson K."/>
            <person name="Hayden H.S."/>
            <person name="Jacobs M."/>
            <person name="Gallagher L.A."/>
            <person name="Manoil C."/>
            <person name="Ernst R.K."/>
            <person name="Drees B."/>
            <person name="Buckley D."/>
            <person name="Haugen E."/>
            <person name="Bovee D."/>
            <person name="Zhou Y."/>
            <person name="Chang J."/>
            <person name="Levy R."/>
            <person name="Lim R."/>
            <person name="Gillett W."/>
            <person name="Guenthener D."/>
            <person name="Kang A."/>
            <person name="Shaffer S.A."/>
            <person name="Taylor G."/>
            <person name="Chen J."/>
            <person name="Gallis B."/>
            <person name="D'Argenio D.A."/>
            <person name="Forsman M."/>
            <person name="Olson M.V."/>
            <person name="Goodlett D.R."/>
            <person name="Kaul R."/>
            <person name="Miller S.I."/>
            <person name="Brittnacher M.J."/>
        </authorList>
    </citation>
    <scope>NUCLEOTIDE SEQUENCE [LARGE SCALE GENOMIC DNA]</scope>
    <source>
        <strain>U112</strain>
    </source>
</reference>
<keyword id="KW-0067">ATP-binding</keyword>
<keyword id="KW-0143">Chaperone</keyword>
<keyword id="KW-0963">Cytoplasm</keyword>
<keyword id="KW-0547">Nucleotide-binding</keyword>
<accession>A0Q6L9</accession>
<proteinExistence type="inferred from homology"/>